<dbReference type="EC" id="3.6.1.1" evidence="1"/>
<dbReference type="EMBL" id="AJ938182">
    <property type="protein sequence ID" value="CAI81545.1"/>
    <property type="molecule type" value="Genomic_DNA"/>
</dbReference>
<dbReference type="RefSeq" id="WP_001140871.1">
    <property type="nucleotide sequence ID" value="NC_007622.1"/>
</dbReference>
<dbReference type="SMR" id="Q2YU53"/>
<dbReference type="KEGG" id="sab:SAB1856"/>
<dbReference type="HOGENOM" id="CLU_025243_0_1_9"/>
<dbReference type="GO" id="GO:0005737">
    <property type="term" value="C:cytoplasm"/>
    <property type="evidence" value="ECO:0007669"/>
    <property type="project" value="UniProtKB-SubCell"/>
</dbReference>
<dbReference type="GO" id="GO:0004427">
    <property type="term" value="F:inorganic diphosphate phosphatase activity"/>
    <property type="evidence" value="ECO:0007669"/>
    <property type="project" value="UniProtKB-UniRule"/>
</dbReference>
<dbReference type="GO" id="GO:0030145">
    <property type="term" value="F:manganese ion binding"/>
    <property type="evidence" value="ECO:0007669"/>
    <property type="project" value="UniProtKB-UniRule"/>
</dbReference>
<dbReference type="FunFam" id="3.10.310.20:FF:000001">
    <property type="entry name" value="Probable manganese-dependent inorganic pyrophosphatase"/>
    <property type="match status" value="1"/>
</dbReference>
<dbReference type="FunFam" id="3.90.1640.10:FF:000001">
    <property type="entry name" value="Probable manganese-dependent inorganic pyrophosphatase"/>
    <property type="match status" value="1"/>
</dbReference>
<dbReference type="Gene3D" id="3.10.310.20">
    <property type="entry name" value="DHHA2 domain"/>
    <property type="match status" value="1"/>
</dbReference>
<dbReference type="Gene3D" id="3.90.1640.10">
    <property type="entry name" value="inorganic pyrophosphatase (n-terminal core)"/>
    <property type="match status" value="1"/>
</dbReference>
<dbReference type="HAMAP" id="MF_00207">
    <property type="entry name" value="PPase_C"/>
    <property type="match status" value="1"/>
</dbReference>
<dbReference type="InterPro" id="IPR001667">
    <property type="entry name" value="DDH_dom"/>
</dbReference>
<dbReference type="InterPro" id="IPR038763">
    <property type="entry name" value="DHH_sf"/>
</dbReference>
<dbReference type="InterPro" id="IPR004097">
    <property type="entry name" value="DHHA2"/>
</dbReference>
<dbReference type="InterPro" id="IPR038222">
    <property type="entry name" value="DHHA2_dom_sf"/>
</dbReference>
<dbReference type="InterPro" id="IPR022934">
    <property type="entry name" value="Mn-dep_inorganic_PyrPase"/>
</dbReference>
<dbReference type="NCBIfam" id="NF003877">
    <property type="entry name" value="PRK05427.1"/>
    <property type="match status" value="1"/>
</dbReference>
<dbReference type="PANTHER" id="PTHR12112">
    <property type="entry name" value="BNIP - RELATED"/>
    <property type="match status" value="1"/>
</dbReference>
<dbReference type="PANTHER" id="PTHR12112:SF22">
    <property type="entry name" value="MANGANESE-DEPENDENT INORGANIC PYROPHOSPHATASE-RELATED"/>
    <property type="match status" value="1"/>
</dbReference>
<dbReference type="Pfam" id="PF01368">
    <property type="entry name" value="DHH"/>
    <property type="match status" value="1"/>
</dbReference>
<dbReference type="Pfam" id="PF02833">
    <property type="entry name" value="DHHA2"/>
    <property type="match status" value="1"/>
</dbReference>
<dbReference type="SMART" id="SM01131">
    <property type="entry name" value="DHHA2"/>
    <property type="match status" value="1"/>
</dbReference>
<dbReference type="SUPFAM" id="SSF64182">
    <property type="entry name" value="DHH phosphoesterases"/>
    <property type="match status" value="1"/>
</dbReference>
<reference key="1">
    <citation type="journal article" date="2007" name="PLoS ONE">
        <title>Molecular correlates of host specialization in Staphylococcus aureus.</title>
        <authorList>
            <person name="Herron-Olson L."/>
            <person name="Fitzgerald J.R."/>
            <person name="Musser J.M."/>
            <person name="Kapur V."/>
        </authorList>
    </citation>
    <scope>NUCLEOTIDE SEQUENCE [LARGE SCALE GENOMIC DNA]</scope>
    <source>
        <strain>bovine RF122 / ET3-1</strain>
    </source>
</reference>
<feature type="chain" id="PRO_1000012321" description="Probable manganese-dependent inorganic pyrophosphatase">
    <location>
        <begin position="1"/>
        <end position="309"/>
    </location>
</feature>
<feature type="binding site" evidence="1">
    <location>
        <position position="9"/>
    </location>
    <ligand>
        <name>Mn(2+)</name>
        <dbReference type="ChEBI" id="CHEBI:29035"/>
        <label>1</label>
    </ligand>
</feature>
<feature type="binding site" evidence="1">
    <location>
        <position position="13"/>
    </location>
    <ligand>
        <name>Mn(2+)</name>
        <dbReference type="ChEBI" id="CHEBI:29035"/>
        <label>1</label>
    </ligand>
</feature>
<feature type="binding site" evidence="1">
    <location>
        <position position="15"/>
    </location>
    <ligand>
        <name>Mn(2+)</name>
        <dbReference type="ChEBI" id="CHEBI:29035"/>
        <label>2</label>
    </ligand>
</feature>
<feature type="binding site" evidence="1">
    <location>
        <position position="75"/>
    </location>
    <ligand>
        <name>Mn(2+)</name>
        <dbReference type="ChEBI" id="CHEBI:29035"/>
        <label>1</label>
    </ligand>
</feature>
<feature type="binding site" evidence="1">
    <location>
        <position position="75"/>
    </location>
    <ligand>
        <name>Mn(2+)</name>
        <dbReference type="ChEBI" id="CHEBI:29035"/>
        <label>2</label>
    </ligand>
</feature>
<feature type="binding site" evidence="1">
    <location>
        <position position="97"/>
    </location>
    <ligand>
        <name>Mn(2+)</name>
        <dbReference type="ChEBI" id="CHEBI:29035"/>
        <label>2</label>
    </ligand>
</feature>
<feature type="binding site" evidence="1">
    <location>
        <position position="149"/>
    </location>
    <ligand>
        <name>Mn(2+)</name>
        <dbReference type="ChEBI" id="CHEBI:29035"/>
        <label>2</label>
    </ligand>
</feature>
<protein>
    <recommendedName>
        <fullName evidence="1">Probable manganese-dependent inorganic pyrophosphatase</fullName>
        <ecNumber evidence="1">3.6.1.1</ecNumber>
    </recommendedName>
    <alternativeName>
        <fullName evidence="1">Pyrophosphate phospho-hydrolase</fullName>
        <shortName evidence="1">PPase</shortName>
    </alternativeName>
</protein>
<evidence type="ECO:0000255" key="1">
    <source>
        <dbReference type="HAMAP-Rule" id="MF_00207"/>
    </source>
</evidence>
<organism>
    <name type="scientific">Staphylococcus aureus (strain bovine RF122 / ET3-1)</name>
    <dbReference type="NCBI Taxonomy" id="273036"/>
    <lineage>
        <taxon>Bacteria</taxon>
        <taxon>Bacillati</taxon>
        <taxon>Bacillota</taxon>
        <taxon>Bacilli</taxon>
        <taxon>Bacillales</taxon>
        <taxon>Staphylococcaceae</taxon>
        <taxon>Staphylococcus</taxon>
    </lineage>
</organism>
<sequence length="309" mass="34069">MAKTYIFGHKNPDTDAISSAIIMAEFEQLRGNSGAKAYRLGDVSAETQFALDTFNVPAPELLTDDLDGQDVILVDHNEFQQSSDTIASATIKHVIDHHRIANFETAGPLCYRAEPVGCTATILYKMFRERGFEIKPEIAGLMLSAIISDSLLFKSPTCTQQDVKAAEELKDIAKVDIQKYGLDMLKAGASTTDKSVEFLLNMDAKSFTMGDYVTRIAQVNAVDLDEVLNRKEDLEKEMLAVSAQEKYDLFVLVVTDIINSDSKILVVGAEKDKVGEAFNVQLEDDMAFLSGVVSRKKQIVPQITEALTK</sequence>
<proteinExistence type="inferred from homology"/>
<gene>
    <name evidence="1" type="primary">ppaC</name>
    <name type="ordered locus">SAB1856</name>
</gene>
<comment type="catalytic activity">
    <reaction evidence="1">
        <text>diphosphate + H2O = 2 phosphate + H(+)</text>
        <dbReference type="Rhea" id="RHEA:24576"/>
        <dbReference type="ChEBI" id="CHEBI:15377"/>
        <dbReference type="ChEBI" id="CHEBI:15378"/>
        <dbReference type="ChEBI" id="CHEBI:33019"/>
        <dbReference type="ChEBI" id="CHEBI:43474"/>
        <dbReference type="EC" id="3.6.1.1"/>
    </reaction>
</comment>
<comment type="cofactor">
    <cofactor evidence="1">
        <name>Mn(2+)</name>
        <dbReference type="ChEBI" id="CHEBI:29035"/>
    </cofactor>
    <text evidence="1">Binds 2 manganese ions per subunit.</text>
</comment>
<comment type="subcellular location">
    <subcellularLocation>
        <location evidence="1">Cytoplasm</location>
    </subcellularLocation>
</comment>
<comment type="similarity">
    <text evidence="1">Belongs to the PPase class C family.</text>
</comment>
<keyword id="KW-0963">Cytoplasm</keyword>
<keyword id="KW-0378">Hydrolase</keyword>
<keyword id="KW-0464">Manganese</keyword>
<keyword id="KW-0479">Metal-binding</keyword>
<name>PPAC_STAAB</name>
<accession>Q2YU53</accession>